<comment type="function">
    <text evidence="1">Plays a role in cell wall integrity. Affects the cell wall polymer composition in the growing region of the cell (By similarity).</text>
</comment>
<comment type="subcellular location">
    <subcellularLocation>
        <location evidence="1">Cell membrane</location>
        <topology evidence="1">Single-pass type III membrane protein</topology>
        <orientation evidence="1">Cytoplasmic side</orientation>
    </subcellularLocation>
    <subcellularLocation>
        <location evidence="1">Bud membrane</location>
        <topology evidence="1">Single-pass type III membrane protein</topology>
        <orientation evidence="1">Cytoplasmic side</orientation>
    </subcellularLocation>
    <text evidence="1">Localizes on the inner surface of the plasma membrane at the bud and in the daughter cell. Localizes at an incipient bud site in the cells with emerging buds, a bud tip in small- or medium-budded cells, and a cell periphery in large-budded cells.</text>
</comment>
<comment type="similarity">
    <text evidence="4">Belongs to the SKG1 family.</text>
</comment>
<name>SKG1_EREGS</name>
<dbReference type="EMBL" id="AE016819">
    <property type="protein sequence ID" value="AAS53671.1"/>
    <property type="molecule type" value="Genomic_DNA"/>
</dbReference>
<dbReference type="RefSeq" id="NP_985847.1">
    <property type="nucleotide sequence ID" value="NM_211202.1"/>
</dbReference>
<dbReference type="SMR" id="Q753L2"/>
<dbReference type="FunCoup" id="Q753L2">
    <property type="interactions" value="19"/>
</dbReference>
<dbReference type="EnsemblFungi" id="AAS53671">
    <property type="protein sequence ID" value="AAS53671"/>
    <property type="gene ID" value="AGOS_AFR300C"/>
</dbReference>
<dbReference type="GeneID" id="4622110"/>
<dbReference type="KEGG" id="ago:AGOS_AFR300C"/>
<dbReference type="eggNOG" id="ENOG502RZI6">
    <property type="taxonomic scope" value="Eukaryota"/>
</dbReference>
<dbReference type="HOGENOM" id="CLU_079389_0_0_1"/>
<dbReference type="InParanoid" id="Q753L2"/>
<dbReference type="OMA" id="KYYVPAY"/>
<dbReference type="OrthoDB" id="4097102at2759"/>
<dbReference type="Proteomes" id="UP000000591">
    <property type="component" value="Chromosome VI"/>
</dbReference>
<dbReference type="GO" id="GO:0033101">
    <property type="term" value="C:cellular bud membrane"/>
    <property type="evidence" value="ECO:0007669"/>
    <property type="project" value="UniProtKB-SubCell"/>
</dbReference>
<dbReference type="GO" id="GO:0071555">
    <property type="term" value="P:cell wall organization"/>
    <property type="evidence" value="ECO:0007669"/>
    <property type="project" value="UniProtKB-KW"/>
</dbReference>
<accession>Q753L2</accession>
<evidence type="ECO:0000250" key="1"/>
<evidence type="ECO:0000255" key="2"/>
<evidence type="ECO:0000256" key="3">
    <source>
        <dbReference type="SAM" id="MobiDB-lite"/>
    </source>
</evidence>
<evidence type="ECO:0000305" key="4"/>
<reference key="1">
    <citation type="journal article" date="2004" name="Science">
        <title>The Ashbya gossypii genome as a tool for mapping the ancient Saccharomyces cerevisiae genome.</title>
        <authorList>
            <person name="Dietrich F.S."/>
            <person name="Voegeli S."/>
            <person name="Brachat S."/>
            <person name="Lerch A."/>
            <person name="Gates K."/>
            <person name="Steiner S."/>
            <person name="Mohr C."/>
            <person name="Poehlmann R."/>
            <person name="Luedi P."/>
            <person name="Choi S."/>
            <person name="Wing R.A."/>
            <person name="Flavier A."/>
            <person name="Gaffney T.D."/>
            <person name="Philippsen P."/>
        </authorList>
    </citation>
    <scope>NUCLEOTIDE SEQUENCE [LARGE SCALE GENOMIC DNA]</scope>
    <source>
        <strain>ATCC 10895 / CBS 109.51 / FGSC 9923 / NRRL Y-1056</strain>
    </source>
</reference>
<reference key="2">
    <citation type="journal article" date="2013" name="G3 (Bethesda)">
        <title>Genomes of Ashbya fungi isolated from insects reveal four mating-type loci, numerous translocations, lack of transposons, and distinct gene duplications.</title>
        <authorList>
            <person name="Dietrich F.S."/>
            <person name="Voegeli S."/>
            <person name="Kuo S."/>
            <person name="Philippsen P."/>
        </authorList>
    </citation>
    <scope>GENOME REANNOTATION</scope>
    <source>
        <strain>ATCC 10895 / CBS 109.51 / FGSC 9923 / NRRL Y-1056</strain>
    </source>
</reference>
<gene>
    <name type="primary">SKG1</name>
    <name type="ordered locus">AFR300C</name>
</gene>
<proteinExistence type="inferred from homology"/>
<protein>
    <recommendedName>
        <fullName>Suppressor of lethality of KEX2 GAS1 double null mutant protein 1</fullName>
    </recommendedName>
</protein>
<organism>
    <name type="scientific">Eremothecium gossypii (strain ATCC 10895 / CBS 109.51 / FGSC 9923 / NRRL Y-1056)</name>
    <name type="common">Yeast</name>
    <name type="synonym">Ashbya gossypii</name>
    <dbReference type="NCBI Taxonomy" id="284811"/>
    <lineage>
        <taxon>Eukaryota</taxon>
        <taxon>Fungi</taxon>
        <taxon>Dikarya</taxon>
        <taxon>Ascomycota</taxon>
        <taxon>Saccharomycotina</taxon>
        <taxon>Saccharomycetes</taxon>
        <taxon>Saccharomycetales</taxon>
        <taxon>Saccharomycetaceae</taxon>
        <taxon>Eremothecium</taxon>
    </lineage>
</organism>
<feature type="chain" id="PRO_0000399668" description="Suppressor of lethality of KEX2 GAS1 double null mutant protein 1">
    <location>
        <begin position="1"/>
        <end position="307"/>
    </location>
</feature>
<feature type="topological domain" description="Extracellular" evidence="2">
    <location>
        <begin position="1"/>
        <end position="7"/>
    </location>
</feature>
<feature type="transmembrane region" description="Helical; Signal-anchor for type III membrane protein" evidence="2">
    <location>
        <begin position="8"/>
        <end position="28"/>
    </location>
</feature>
<feature type="topological domain" description="Cytoplasmic" evidence="2">
    <location>
        <begin position="29"/>
        <end position="307"/>
    </location>
</feature>
<feature type="region of interest" description="Disordered" evidence="3">
    <location>
        <begin position="61"/>
        <end position="137"/>
    </location>
</feature>
<feature type="compositionally biased region" description="Polar residues" evidence="3">
    <location>
        <begin position="128"/>
        <end position="137"/>
    </location>
</feature>
<keyword id="KW-1003">Cell membrane</keyword>
<keyword id="KW-0961">Cell wall biogenesis/degradation</keyword>
<keyword id="KW-0472">Membrane</keyword>
<keyword id="KW-1185">Reference proteome</keyword>
<keyword id="KW-0735">Signal-anchor</keyword>
<keyword id="KW-0812">Transmembrane</keyword>
<keyword id="KW-1133">Transmembrane helix</keyword>
<sequence length="307" mass="34105">MAVDTTTVAVALAVVLPVSIAVLIALVFWCKTQRRFKREEQDDEKNRGYDDEVVTFREMRASSGTLGPDGTPPTACAEGSGSSEGSESEKDPSPTPAPAGRAARTYMPAYRRRLNRSLSRQQSRADEMTTNSSAASYDTQHAQNAQLSVFEQMVPVLQVDNSSPFANPRDAAFERGSRHSSESLMKSLKNQDFGSYPKRRPSAANTANLAVYNGSVSSFSSRVPSSTTLNCMGDESFYAYEGSVLPRTGRDLPEVKQDVYMLKNNYDVTNNEEITEEDQYENEFTNYSENKREFIDSLRPKAERMSN</sequence>